<organism>
    <name type="scientific">Anaeromyxobacter dehalogenans (strain 2CP-C)</name>
    <dbReference type="NCBI Taxonomy" id="290397"/>
    <lineage>
        <taxon>Bacteria</taxon>
        <taxon>Pseudomonadati</taxon>
        <taxon>Myxococcota</taxon>
        <taxon>Myxococcia</taxon>
        <taxon>Myxococcales</taxon>
        <taxon>Cystobacterineae</taxon>
        <taxon>Anaeromyxobacteraceae</taxon>
        <taxon>Anaeromyxobacter</taxon>
    </lineage>
</organism>
<accession>Q2INT8</accession>
<reference key="1">
    <citation type="submission" date="2006-01" db="EMBL/GenBank/DDBJ databases">
        <title>Complete sequence of Anaeromyxobacter dehalogenans 2CP-C.</title>
        <authorList>
            <person name="Copeland A."/>
            <person name="Lucas S."/>
            <person name="Lapidus A."/>
            <person name="Barry K."/>
            <person name="Detter J.C."/>
            <person name="Glavina T."/>
            <person name="Hammon N."/>
            <person name="Israni S."/>
            <person name="Pitluck S."/>
            <person name="Brettin T."/>
            <person name="Bruce D."/>
            <person name="Han C."/>
            <person name="Tapia R."/>
            <person name="Gilna P."/>
            <person name="Kiss H."/>
            <person name="Schmutz J."/>
            <person name="Larimer F."/>
            <person name="Land M."/>
            <person name="Kyrpides N."/>
            <person name="Anderson I."/>
            <person name="Sanford R.A."/>
            <person name="Ritalahti K.M."/>
            <person name="Thomas H.S."/>
            <person name="Kirby J.R."/>
            <person name="Zhulin I.B."/>
            <person name="Loeffler F.E."/>
            <person name="Richardson P."/>
        </authorList>
    </citation>
    <scope>NUCLEOTIDE SEQUENCE [LARGE SCALE GENOMIC DNA]</scope>
    <source>
        <strain>2CP-C</strain>
    </source>
</reference>
<proteinExistence type="inferred from homology"/>
<keyword id="KW-0378">Hydrolase</keyword>
<keyword id="KW-1185">Reference proteome</keyword>
<sequence>MADRVRARIVVSGRVQGVAFRQSAADEGRRLGVKGWVRNLPDGRVEAEVEGERAAVGALVRWCHAGPPAARVDGVEVEWVDPAGDLGAFEIRF</sequence>
<evidence type="ECO:0000255" key="1">
    <source>
        <dbReference type="PROSITE-ProRule" id="PRU00520"/>
    </source>
</evidence>
<evidence type="ECO:0000305" key="2"/>
<protein>
    <recommendedName>
        <fullName>Acylphosphatase</fullName>
        <ecNumber>3.6.1.7</ecNumber>
    </recommendedName>
    <alternativeName>
        <fullName>Acylphosphate phosphohydrolase</fullName>
    </alternativeName>
</protein>
<name>ACYP_ANADE</name>
<comment type="catalytic activity">
    <reaction>
        <text>an acyl phosphate + H2O = a carboxylate + phosphate + H(+)</text>
        <dbReference type="Rhea" id="RHEA:14965"/>
        <dbReference type="ChEBI" id="CHEBI:15377"/>
        <dbReference type="ChEBI" id="CHEBI:15378"/>
        <dbReference type="ChEBI" id="CHEBI:29067"/>
        <dbReference type="ChEBI" id="CHEBI:43474"/>
        <dbReference type="ChEBI" id="CHEBI:59918"/>
        <dbReference type="EC" id="3.6.1.7"/>
    </reaction>
</comment>
<comment type="similarity">
    <text evidence="2">Belongs to the acylphosphatase family.</text>
</comment>
<gene>
    <name type="primary">acyP</name>
    <name type="ordered locus">Adeh_0694</name>
</gene>
<dbReference type="EC" id="3.6.1.7"/>
<dbReference type="EMBL" id="CP000251">
    <property type="protein sequence ID" value="ABC80470.1"/>
    <property type="molecule type" value="Genomic_DNA"/>
</dbReference>
<dbReference type="RefSeq" id="WP_011419753.1">
    <property type="nucleotide sequence ID" value="NC_007760.1"/>
</dbReference>
<dbReference type="SMR" id="Q2INT8"/>
<dbReference type="STRING" id="290397.Adeh_0694"/>
<dbReference type="KEGG" id="ade:Adeh_0694"/>
<dbReference type="eggNOG" id="COG1254">
    <property type="taxonomic scope" value="Bacteria"/>
</dbReference>
<dbReference type="HOGENOM" id="CLU_141932_3_2_7"/>
<dbReference type="OrthoDB" id="5295388at2"/>
<dbReference type="Proteomes" id="UP000001935">
    <property type="component" value="Chromosome"/>
</dbReference>
<dbReference type="GO" id="GO:0003998">
    <property type="term" value="F:acylphosphatase activity"/>
    <property type="evidence" value="ECO:0007669"/>
    <property type="project" value="UniProtKB-EC"/>
</dbReference>
<dbReference type="Gene3D" id="3.30.70.100">
    <property type="match status" value="1"/>
</dbReference>
<dbReference type="InterPro" id="IPR020456">
    <property type="entry name" value="Acylphosphatase"/>
</dbReference>
<dbReference type="InterPro" id="IPR001792">
    <property type="entry name" value="Acylphosphatase-like_dom"/>
</dbReference>
<dbReference type="InterPro" id="IPR036046">
    <property type="entry name" value="Acylphosphatase-like_dom_sf"/>
</dbReference>
<dbReference type="InterPro" id="IPR017968">
    <property type="entry name" value="Acylphosphatase_CS"/>
</dbReference>
<dbReference type="NCBIfam" id="NF011013">
    <property type="entry name" value="PRK14441.1"/>
    <property type="match status" value="1"/>
</dbReference>
<dbReference type="NCBIfam" id="NF011016">
    <property type="entry name" value="PRK14444.1"/>
    <property type="match status" value="1"/>
</dbReference>
<dbReference type="PANTHER" id="PTHR47268">
    <property type="entry name" value="ACYLPHOSPHATASE"/>
    <property type="match status" value="1"/>
</dbReference>
<dbReference type="PANTHER" id="PTHR47268:SF4">
    <property type="entry name" value="ACYLPHOSPHATASE"/>
    <property type="match status" value="1"/>
</dbReference>
<dbReference type="Pfam" id="PF00708">
    <property type="entry name" value="Acylphosphatase"/>
    <property type="match status" value="1"/>
</dbReference>
<dbReference type="PRINTS" id="PR00112">
    <property type="entry name" value="ACYLPHPHTASE"/>
</dbReference>
<dbReference type="SUPFAM" id="SSF54975">
    <property type="entry name" value="Acylphosphatase/BLUF domain-like"/>
    <property type="match status" value="1"/>
</dbReference>
<dbReference type="PROSITE" id="PS00150">
    <property type="entry name" value="ACYLPHOSPHATASE_1"/>
    <property type="match status" value="1"/>
</dbReference>
<dbReference type="PROSITE" id="PS00151">
    <property type="entry name" value="ACYLPHOSPHATASE_2"/>
    <property type="match status" value="1"/>
</dbReference>
<dbReference type="PROSITE" id="PS51160">
    <property type="entry name" value="ACYLPHOSPHATASE_3"/>
    <property type="match status" value="1"/>
</dbReference>
<feature type="chain" id="PRO_0000326650" description="Acylphosphatase">
    <location>
        <begin position="1"/>
        <end position="93"/>
    </location>
</feature>
<feature type="domain" description="Acylphosphatase-like" evidence="1">
    <location>
        <begin position="6"/>
        <end position="93"/>
    </location>
</feature>
<feature type="active site" evidence="1">
    <location>
        <position position="21"/>
    </location>
</feature>
<feature type="active site" evidence="1">
    <location>
        <position position="39"/>
    </location>
</feature>